<dbReference type="EC" id="3.6.4.13"/>
<dbReference type="EMBL" id="AAHF01000001">
    <property type="protein sequence ID" value="EAL93145.1"/>
    <property type="molecule type" value="Genomic_DNA"/>
</dbReference>
<dbReference type="RefSeq" id="XP_755183.1">
    <property type="nucleotide sequence ID" value="XM_750090.1"/>
</dbReference>
<dbReference type="SMR" id="Q4X1X0"/>
<dbReference type="FunCoup" id="Q4X1X0">
    <property type="interactions" value="114"/>
</dbReference>
<dbReference type="STRING" id="330879.Q4X1X0"/>
<dbReference type="EnsemblFungi" id="EAL93145">
    <property type="protein sequence ID" value="EAL93145"/>
    <property type="gene ID" value="AFUA_2G08480"/>
</dbReference>
<dbReference type="GeneID" id="3513301"/>
<dbReference type="KEGG" id="afm:AFUA_2G08480"/>
<dbReference type="VEuPathDB" id="FungiDB:Afu2g08480"/>
<dbReference type="eggNOG" id="KOG0335">
    <property type="taxonomic scope" value="Eukaryota"/>
</dbReference>
<dbReference type="HOGENOM" id="CLU_003041_18_0_1"/>
<dbReference type="InParanoid" id="Q4X1X0"/>
<dbReference type="OMA" id="HSTIDFI"/>
<dbReference type="OrthoDB" id="10256233at2759"/>
<dbReference type="Proteomes" id="UP000002530">
    <property type="component" value="Chromosome 2"/>
</dbReference>
<dbReference type="GO" id="GO:0005739">
    <property type="term" value="C:mitochondrion"/>
    <property type="evidence" value="ECO:0007669"/>
    <property type="project" value="UniProtKB-SubCell"/>
</dbReference>
<dbReference type="GO" id="GO:0005730">
    <property type="term" value="C:nucleolus"/>
    <property type="evidence" value="ECO:0000318"/>
    <property type="project" value="GO_Central"/>
</dbReference>
<dbReference type="GO" id="GO:0005524">
    <property type="term" value="F:ATP binding"/>
    <property type="evidence" value="ECO:0007669"/>
    <property type="project" value="UniProtKB-KW"/>
</dbReference>
<dbReference type="GO" id="GO:0016887">
    <property type="term" value="F:ATP hydrolysis activity"/>
    <property type="evidence" value="ECO:0007669"/>
    <property type="project" value="RHEA"/>
</dbReference>
<dbReference type="GO" id="GO:0003723">
    <property type="term" value="F:RNA binding"/>
    <property type="evidence" value="ECO:0007669"/>
    <property type="project" value="UniProtKB-KW"/>
</dbReference>
<dbReference type="GO" id="GO:0003724">
    <property type="term" value="F:RNA helicase activity"/>
    <property type="evidence" value="ECO:0007669"/>
    <property type="project" value="UniProtKB-EC"/>
</dbReference>
<dbReference type="GO" id="GO:0000463">
    <property type="term" value="P:maturation of LSU-rRNA from tricistronic rRNA transcript (SSU-rRNA, 5.8S rRNA, LSU-rRNA)"/>
    <property type="evidence" value="ECO:0000318"/>
    <property type="project" value="GO_Central"/>
</dbReference>
<dbReference type="CDD" id="cd18787">
    <property type="entry name" value="SF2_C_DEAD"/>
    <property type="match status" value="1"/>
</dbReference>
<dbReference type="Gene3D" id="3.40.50.300">
    <property type="entry name" value="P-loop containing nucleotide triphosphate hydrolases"/>
    <property type="match status" value="2"/>
</dbReference>
<dbReference type="InterPro" id="IPR011545">
    <property type="entry name" value="DEAD/DEAH_box_helicase_dom"/>
</dbReference>
<dbReference type="InterPro" id="IPR014001">
    <property type="entry name" value="Helicase_ATP-bd"/>
</dbReference>
<dbReference type="InterPro" id="IPR001650">
    <property type="entry name" value="Helicase_C-like"/>
</dbReference>
<dbReference type="InterPro" id="IPR027417">
    <property type="entry name" value="P-loop_NTPase"/>
</dbReference>
<dbReference type="PANTHER" id="PTHR47960">
    <property type="entry name" value="DEAD-BOX ATP-DEPENDENT RNA HELICASE 50"/>
    <property type="match status" value="1"/>
</dbReference>
<dbReference type="Pfam" id="PF00270">
    <property type="entry name" value="DEAD"/>
    <property type="match status" value="1"/>
</dbReference>
<dbReference type="Pfam" id="PF00271">
    <property type="entry name" value="Helicase_C"/>
    <property type="match status" value="1"/>
</dbReference>
<dbReference type="SMART" id="SM00487">
    <property type="entry name" value="DEXDc"/>
    <property type="match status" value="1"/>
</dbReference>
<dbReference type="SMART" id="SM00490">
    <property type="entry name" value="HELICc"/>
    <property type="match status" value="1"/>
</dbReference>
<dbReference type="SUPFAM" id="SSF52540">
    <property type="entry name" value="P-loop containing nucleoside triphosphate hydrolases"/>
    <property type="match status" value="1"/>
</dbReference>
<dbReference type="PROSITE" id="PS51192">
    <property type="entry name" value="HELICASE_ATP_BIND_1"/>
    <property type="match status" value="1"/>
</dbReference>
<dbReference type="PROSITE" id="PS51194">
    <property type="entry name" value="HELICASE_CTER"/>
    <property type="match status" value="1"/>
</dbReference>
<dbReference type="PROSITE" id="PS51195">
    <property type="entry name" value="Q_MOTIF"/>
    <property type="match status" value="1"/>
</dbReference>
<reference key="1">
    <citation type="journal article" date="2005" name="Nature">
        <title>Genomic sequence of the pathogenic and allergenic filamentous fungus Aspergillus fumigatus.</title>
        <authorList>
            <person name="Nierman W.C."/>
            <person name="Pain A."/>
            <person name="Anderson M.J."/>
            <person name="Wortman J.R."/>
            <person name="Kim H.S."/>
            <person name="Arroyo J."/>
            <person name="Berriman M."/>
            <person name="Abe K."/>
            <person name="Archer D.B."/>
            <person name="Bermejo C."/>
            <person name="Bennett J.W."/>
            <person name="Bowyer P."/>
            <person name="Chen D."/>
            <person name="Collins M."/>
            <person name="Coulsen R."/>
            <person name="Davies R."/>
            <person name="Dyer P.S."/>
            <person name="Farman M.L."/>
            <person name="Fedorova N."/>
            <person name="Fedorova N.D."/>
            <person name="Feldblyum T.V."/>
            <person name="Fischer R."/>
            <person name="Fosker N."/>
            <person name="Fraser A."/>
            <person name="Garcia J.L."/>
            <person name="Garcia M.J."/>
            <person name="Goble A."/>
            <person name="Goldman G.H."/>
            <person name="Gomi K."/>
            <person name="Griffith-Jones S."/>
            <person name="Gwilliam R."/>
            <person name="Haas B.J."/>
            <person name="Haas H."/>
            <person name="Harris D.E."/>
            <person name="Horiuchi H."/>
            <person name="Huang J."/>
            <person name="Humphray S."/>
            <person name="Jimenez J."/>
            <person name="Keller N."/>
            <person name="Khouri H."/>
            <person name="Kitamoto K."/>
            <person name="Kobayashi T."/>
            <person name="Konzack S."/>
            <person name="Kulkarni R."/>
            <person name="Kumagai T."/>
            <person name="Lafton A."/>
            <person name="Latge J.-P."/>
            <person name="Li W."/>
            <person name="Lord A."/>
            <person name="Lu C."/>
            <person name="Majoros W.H."/>
            <person name="May G.S."/>
            <person name="Miller B.L."/>
            <person name="Mohamoud Y."/>
            <person name="Molina M."/>
            <person name="Monod M."/>
            <person name="Mouyna I."/>
            <person name="Mulligan S."/>
            <person name="Murphy L.D."/>
            <person name="O'Neil S."/>
            <person name="Paulsen I."/>
            <person name="Penalva M.A."/>
            <person name="Pertea M."/>
            <person name="Price C."/>
            <person name="Pritchard B.L."/>
            <person name="Quail M.A."/>
            <person name="Rabbinowitsch E."/>
            <person name="Rawlins N."/>
            <person name="Rajandream M.A."/>
            <person name="Reichard U."/>
            <person name="Renauld H."/>
            <person name="Robson G.D."/>
            <person name="Rodriguez de Cordoba S."/>
            <person name="Rodriguez-Pena J.M."/>
            <person name="Ronning C.M."/>
            <person name="Rutter S."/>
            <person name="Salzberg S.L."/>
            <person name="Sanchez M."/>
            <person name="Sanchez-Ferrero J.C."/>
            <person name="Saunders D."/>
            <person name="Seeger K."/>
            <person name="Squares R."/>
            <person name="Squares S."/>
            <person name="Takeuchi M."/>
            <person name="Tekaia F."/>
            <person name="Turner G."/>
            <person name="Vazquez de Aldana C.R."/>
            <person name="Weidman J."/>
            <person name="White O."/>
            <person name="Woodward J.R."/>
            <person name="Yu J.-H."/>
            <person name="Fraser C.M."/>
            <person name="Galagan J.E."/>
            <person name="Asai K."/>
            <person name="Machida M."/>
            <person name="Hall N."/>
            <person name="Barrell B.G."/>
            <person name="Denning D.W."/>
        </authorList>
    </citation>
    <scope>NUCLEOTIDE SEQUENCE [LARGE SCALE GENOMIC DNA]</scope>
    <source>
        <strain>ATCC MYA-4609 / CBS 101355 / FGSC A1100 / Af293</strain>
    </source>
</reference>
<gene>
    <name type="primary">mrh4</name>
    <name type="ORF">AFUA_2G08480</name>
</gene>
<sequence length="631" mass="70437">MNRLGRLPLPLPPSVCLFCRFRATASLPSSLQATRSMATARLRRRVARMTLSPDVAKPSVVKKTRGDKERFGPFAGMNQTEARIRETPRARSRAAQKRSGEPEEDSQKESPLYKALKMQTALTPIPYGRRAAIKAKIADITSFDQFQLLPVVRNSISSQALPGLVDVTPTPIQRLAIPRLLEEPKTEKKPTKADDDEPRYDQYLLAAETGSGKTLAYLLPVVDAVKREEARDKELEKKEQEEKAREREERLKNRAFDIEPEIPPLSNAGRPRAIILVPTSELVAQVGVKVKALSHTVKYRSGMISSNFTPRRIKNTLFHPDGIDILVATPHLLASIAKTEPYVLSRVSHLVLDEADSLLDRSFAPTTTEIISKAAPSLRKLILCSATIPRSLDNLLRKRYPDIKRLTTPNLHAIPRRVQLGVVDIEKDPYRGNRSLACADVIWSIGKAGDAESEGPYASYVAPKTKKILVFVNEREEADEVAQFLRSKGIDAQSLSRDSDARKQEEILAEFTEAPPPPSPDEILLAQKKRRYEDAIPFEMPEKANQGSSRRLANTKVLVTTDLASRGIDTLAVKTVILYHVPHTTIDFIHRLGRLGRMGKRGRGVVLVGKKDRKDVVKEVREGMFRGQALI</sequence>
<name>MRH4_ASPFU</name>
<organism>
    <name type="scientific">Aspergillus fumigatus (strain ATCC MYA-4609 / CBS 101355 / FGSC A1100 / Af293)</name>
    <name type="common">Neosartorya fumigata</name>
    <dbReference type="NCBI Taxonomy" id="330879"/>
    <lineage>
        <taxon>Eukaryota</taxon>
        <taxon>Fungi</taxon>
        <taxon>Dikarya</taxon>
        <taxon>Ascomycota</taxon>
        <taxon>Pezizomycotina</taxon>
        <taxon>Eurotiomycetes</taxon>
        <taxon>Eurotiomycetidae</taxon>
        <taxon>Eurotiales</taxon>
        <taxon>Aspergillaceae</taxon>
        <taxon>Aspergillus</taxon>
        <taxon>Aspergillus subgen. Fumigati</taxon>
    </lineage>
</organism>
<protein>
    <recommendedName>
        <fullName>ATP-dependent RNA helicase mrh4, mitochondrial</fullName>
        <ecNumber>3.6.4.13</ecNumber>
    </recommendedName>
</protein>
<proteinExistence type="inferred from homology"/>
<evidence type="ECO:0000250" key="1"/>
<evidence type="ECO:0000255" key="2"/>
<evidence type="ECO:0000255" key="3">
    <source>
        <dbReference type="PROSITE-ProRule" id="PRU00541"/>
    </source>
</evidence>
<evidence type="ECO:0000255" key="4">
    <source>
        <dbReference type="PROSITE-ProRule" id="PRU00542"/>
    </source>
</evidence>
<evidence type="ECO:0000256" key="5">
    <source>
        <dbReference type="SAM" id="MobiDB-lite"/>
    </source>
</evidence>
<evidence type="ECO:0000305" key="6"/>
<feature type="transit peptide" description="Mitochondrion" evidence="2">
    <location>
        <begin position="1"/>
        <end position="45"/>
    </location>
</feature>
<feature type="chain" id="PRO_0000232348" description="ATP-dependent RNA helicase mrh4, mitochondrial">
    <location>
        <begin position="46"/>
        <end position="631"/>
    </location>
</feature>
<feature type="domain" description="Helicase ATP-binding" evidence="3">
    <location>
        <begin position="194"/>
        <end position="406"/>
    </location>
</feature>
<feature type="domain" description="Helicase C-terminal" evidence="4">
    <location>
        <begin position="455"/>
        <end position="631"/>
    </location>
</feature>
<feature type="region of interest" description="Disordered" evidence="5">
    <location>
        <begin position="68"/>
        <end position="112"/>
    </location>
</feature>
<feature type="region of interest" description="Disordered" evidence="5">
    <location>
        <begin position="180"/>
        <end position="199"/>
    </location>
</feature>
<feature type="region of interest" description="Disordered" evidence="5">
    <location>
        <begin position="229"/>
        <end position="249"/>
    </location>
</feature>
<feature type="short sequence motif" description="Q motif">
    <location>
        <begin position="141"/>
        <end position="174"/>
    </location>
</feature>
<feature type="short sequence motif" description="DEAD box">
    <location>
        <begin position="353"/>
        <end position="356"/>
    </location>
</feature>
<feature type="compositionally biased region" description="Basic and acidic residues" evidence="5">
    <location>
        <begin position="98"/>
        <end position="108"/>
    </location>
</feature>
<feature type="compositionally biased region" description="Basic and acidic residues" evidence="5">
    <location>
        <begin position="180"/>
        <end position="193"/>
    </location>
</feature>
<feature type="binding site" evidence="3">
    <location>
        <begin position="207"/>
        <end position="214"/>
    </location>
    <ligand>
        <name>ATP</name>
        <dbReference type="ChEBI" id="CHEBI:30616"/>
    </ligand>
</feature>
<keyword id="KW-0067">ATP-binding</keyword>
<keyword id="KW-0347">Helicase</keyword>
<keyword id="KW-0378">Hydrolase</keyword>
<keyword id="KW-0496">Mitochondrion</keyword>
<keyword id="KW-0547">Nucleotide-binding</keyword>
<keyword id="KW-1185">Reference proteome</keyword>
<keyword id="KW-0694">RNA-binding</keyword>
<keyword id="KW-0809">Transit peptide</keyword>
<comment type="function">
    <text evidence="1">ATP-binding RNA helicase involved in mitochondrial RNA metabolism. Required for maintenance of mitochondrial DNA (By similarity).</text>
</comment>
<comment type="catalytic activity">
    <reaction>
        <text>ATP + H2O = ADP + phosphate + H(+)</text>
        <dbReference type="Rhea" id="RHEA:13065"/>
        <dbReference type="ChEBI" id="CHEBI:15377"/>
        <dbReference type="ChEBI" id="CHEBI:15378"/>
        <dbReference type="ChEBI" id="CHEBI:30616"/>
        <dbReference type="ChEBI" id="CHEBI:43474"/>
        <dbReference type="ChEBI" id="CHEBI:456216"/>
        <dbReference type="EC" id="3.6.4.13"/>
    </reaction>
</comment>
<comment type="subcellular location">
    <subcellularLocation>
        <location evidence="1">Mitochondrion</location>
    </subcellularLocation>
</comment>
<comment type="domain">
    <text>The Q motif is unique to and characteristic of the DEAD box family of RNA helicases and controls ATP binding and hydrolysis.</text>
</comment>
<comment type="similarity">
    <text evidence="6">Belongs to the DEAD box helicase family. MRH4 subfamily.</text>
</comment>
<accession>Q4X1X0</accession>